<keyword id="KW-0687">Ribonucleoprotein</keyword>
<keyword id="KW-0689">Ribosomal protein</keyword>
<keyword id="KW-0694">RNA-binding</keyword>
<keyword id="KW-0699">rRNA-binding</keyword>
<keyword id="KW-0820">tRNA-binding</keyword>
<evidence type="ECO:0000255" key="1">
    <source>
        <dbReference type="HAMAP-Rule" id="MF_00480"/>
    </source>
</evidence>
<evidence type="ECO:0000305" key="2"/>
<comment type="function">
    <text evidence="1">One of the primary rRNA binding proteins, it binds directly to 16S rRNA where it nucleates assembly of the head domain of the 30S subunit. Is located at the subunit interface close to the decoding center, probably blocks exit of the E-site tRNA.</text>
</comment>
<comment type="subunit">
    <text evidence="1">Part of the 30S ribosomal subunit. Contacts proteins S9 and S11.</text>
</comment>
<comment type="similarity">
    <text evidence="1">Belongs to the universal ribosomal protein uS7 family.</text>
</comment>
<accession>A3MRV0</accession>
<sequence>MPRRREVPKREVLPDPKYGNVDVAKFMNMLMLSGKKSVAERIVYGAFEQIQTKGGKDPLEVFTVALNNVKPVVEVKSRRVGGANYQVPVEVRPSRRMALAMRWLREAAKKRSEKSMALRLAGELSEAAEGRGGAMKKRDEVHRMAEANRAFSHFRF</sequence>
<dbReference type="EMBL" id="CP000548">
    <property type="protein sequence ID" value="ABO06305.1"/>
    <property type="molecule type" value="Genomic_DNA"/>
</dbReference>
<dbReference type="RefSeq" id="WP_004198359.1">
    <property type="nucleotide sequence ID" value="NZ_CP007802.1"/>
</dbReference>
<dbReference type="SMR" id="A3MRV0"/>
<dbReference type="GeneID" id="93171021"/>
<dbReference type="KEGG" id="bmaz:BM44_3045"/>
<dbReference type="KEGG" id="bmn:BMA10247_3474"/>
<dbReference type="PATRIC" id="fig|320389.8.peg.3417"/>
<dbReference type="GO" id="GO:0015935">
    <property type="term" value="C:small ribosomal subunit"/>
    <property type="evidence" value="ECO:0007669"/>
    <property type="project" value="InterPro"/>
</dbReference>
<dbReference type="GO" id="GO:0019843">
    <property type="term" value="F:rRNA binding"/>
    <property type="evidence" value="ECO:0007669"/>
    <property type="project" value="UniProtKB-UniRule"/>
</dbReference>
<dbReference type="GO" id="GO:0003735">
    <property type="term" value="F:structural constituent of ribosome"/>
    <property type="evidence" value="ECO:0007669"/>
    <property type="project" value="InterPro"/>
</dbReference>
<dbReference type="GO" id="GO:0000049">
    <property type="term" value="F:tRNA binding"/>
    <property type="evidence" value="ECO:0007669"/>
    <property type="project" value="UniProtKB-UniRule"/>
</dbReference>
<dbReference type="GO" id="GO:0006412">
    <property type="term" value="P:translation"/>
    <property type="evidence" value="ECO:0007669"/>
    <property type="project" value="UniProtKB-UniRule"/>
</dbReference>
<dbReference type="CDD" id="cd14869">
    <property type="entry name" value="uS7_Bacteria"/>
    <property type="match status" value="1"/>
</dbReference>
<dbReference type="FunFam" id="1.10.455.10:FF:000001">
    <property type="entry name" value="30S ribosomal protein S7"/>
    <property type="match status" value="1"/>
</dbReference>
<dbReference type="Gene3D" id="1.10.455.10">
    <property type="entry name" value="Ribosomal protein S7 domain"/>
    <property type="match status" value="1"/>
</dbReference>
<dbReference type="HAMAP" id="MF_00480_B">
    <property type="entry name" value="Ribosomal_uS7_B"/>
    <property type="match status" value="1"/>
</dbReference>
<dbReference type="InterPro" id="IPR000235">
    <property type="entry name" value="Ribosomal_uS7"/>
</dbReference>
<dbReference type="InterPro" id="IPR005717">
    <property type="entry name" value="Ribosomal_uS7_bac/org-type"/>
</dbReference>
<dbReference type="InterPro" id="IPR020606">
    <property type="entry name" value="Ribosomal_uS7_CS"/>
</dbReference>
<dbReference type="InterPro" id="IPR023798">
    <property type="entry name" value="Ribosomal_uS7_dom"/>
</dbReference>
<dbReference type="InterPro" id="IPR036823">
    <property type="entry name" value="Ribosomal_uS7_dom_sf"/>
</dbReference>
<dbReference type="NCBIfam" id="TIGR01029">
    <property type="entry name" value="rpsG_bact"/>
    <property type="match status" value="1"/>
</dbReference>
<dbReference type="PANTHER" id="PTHR11205">
    <property type="entry name" value="RIBOSOMAL PROTEIN S7"/>
    <property type="match status" value="1"/>
</dbReference>
<dbReference type="Pfam" id="PF00177">
    <property type="entry name" value="Ribosomal_S7"/>
    <property type="match status" value="1"/>
</dbReference>
<dbReference type="PIRSF" id="PIRSF002122">
    <property type="entry name" value="RPS7p_RPS7a_RPS5e_RPS7o"/>
    <property type="match status" value="1"/>
</dbReference>
<dbReference type="SUPFAM" id="SSF47973">
    <property type="entry name" value="Ribosomal protein S7"/>
    <property type="match status" value="1"/>
</dbReference>
<dbReference type="PROSITE" id="PS00052">
    <property type="entry name" value="RIBOSOMAL_S7"/>
    <property type="match status" value="1"/>
</dbReference>
<feature type="chain" id="PRO_1000014157" description="Small ribosomal subunit protein uS7">
    <location>
        <begin position="1"/>
        <end position="156"/>
    </location>
</feature>
<name>RS7_BURM7</name>
<gene>
    <name evidence="1" type="primary">rpsG</name>
    <name type="ordered locus">BMA10247_3474</name>
</gene>
<protein>
    <recommendedName>
        <fullName evidence="1">Small ribosomal subunit protein uS7</fullName>
    </recommendedName>
    <alternativeName>
        <fullName evidence="2">30S ribosomal protein S7</fullName>
    </alternativeName>
</protein>
<reference key="1">
    <citation type="journal article" date="2010" name="Genome Biol. Evol.">
        <title>Continuing evolution of Burkholderia mallei through genome reduction and large-scale rearrangements.</title>
        <authorList>
            <person name="Losada L."/>
            <person name="Ronning C.M."/>
            <person name="DeShazer D."/>
            <person name="Woods D."/>
            <person name="Fedorova N."/>
            <person name="Kim H.S."/>
            <person name="Shabalina S.A."/>
            <person name="Pearson T.R."/>
            <person name="Brinkac L."/>
            <person name="Tan P."/>
            <person name="Nandi T."/>
            <person name="Crabtree J."/>
            <person name="Badger J."/>
            <person name="Beckstrom-Sternberg S."/>
            <person name="Saqib M."/>
            <person name="Schutzer S.E."/>
            <person name="Keim P."/>
            <person name="Nierman W.C."/>
        </authorList>
    </citation>
    <scope>NUCLEOTIDE SEQUENCE [LARGE SCALE GENOMIC DNA]</scope>
    <source>
        <strain>NCTC 10247</strain>
    </source>
</reference>
<organism>
    <name type="scientific">Burkholderia mallei (strain NCTC 10247)</name>
    <dbReference type="NCBI Taxonomy" id="320389"/>
    <lineage>
        <taxon>Bacteria</taxon>
        <taxon>Pseudomonadati</taxon>
        <taxon>Pseudomonadota</taxon>
        <taxon>Betaproteobacteria</taxon>
        <taxon>Burkholderiales</taxon>
        <taxon>Burkholderiaceae</taxon>
        <taxon>Burkholderia</taxon>
        <taxon>pseudomallei group</taxon>
    </lineage>
</organism>
<proteinExistence type="inferred from homology"/>